<gene>
    <name evidence="1" type="primary">gpt</name>
    <name type="ordered locus">STY0362</name>
    <name type="ordered locus">t2533</name>
</gene>
<evidence type="ECO:0000255" key="1">
    <source>
        <dbReference type="HAMAP-Rule" id="MF_01903"/>
    </source>
</evidence>
<accession>P0A278</accession>
<accession>P26972</accession>
<dbReference type="EC" id="2.4.2.-" evidence="1"/>
<dbReference type="EC" id="2.4.2.22" evidence="1"/>
<dbReference type="EMBL" id="AL513382">
    <property type="protein sequence ID" value="CAD08787.1"/>
    <property type="molecule type" value="Genomic_DNA"/>
</dbReference>
<dbReference type="EMBL" id="AE014613">
    <property type="protein sequence ID" value="AAO70117.1"/>
    <property type="molecule type" value="Genomic_DNA"/>
</dbReference>
<dbReference type="RefSeq" id="NP_454929.1">
    <property type="nucleotide sequence ID" value="NC_003198.1"/>
</dbReference>
<dbReference type="RefSeq" id="WP_001292018.1">
    <property type="nucleotide sequence ID" value="NZ_WSUR01000017.1"/>
</dbReference>
<dbReference type="SMR" id="P0A278"/>
<dbReference type="STRING" id="220341.gene:17584391"/>
<dbReference type="GeneID" id="66754798"/>
<dbReference type="KEGG" id="stt:t2533"/>
<dbReference type="KEGG" id="sty:STY0362"/>
<dbReference type="PATRIC" id="fig|220341.7.peg.356"/>
<dbReference type="eggNOG" id="COG2236">
    <property type="taxonomic scope" value="Bacteria"/>
</dbReference>
<dbReference type="HOGENOM" id="CLU_080904_3_0_6"/>
<dbReference type="OMA" id="FHRDCRA"/>
<dbReference type="OrthoDB" id="9789690at2"/>
<dbReference type="UniPathway" id="UPA00602">
    <property type="reaction ID" value="UER00658"/>
</dbReference>
<dbReference type="UniPathway" id="UPA00909">
    <property type="reaction ID" value="UER00887"/>
</dbReference>
<dbReference type="Proteomes" id="UP000000541">
    <property type="component" value="Chromosome"/>
</dbReference>
<dbReference type="Proteomes" id="UP000002670">
    <property type="component" value="Chromosome"/>
</dbReference>
<dbReference type="GO" id="GO:0005829">
    <property type="term" value="C:cytosol"/>
    <property type="evidence" value="ECO:0007669"/>
    <property type="project" value="TreeGrafter"/>
</dbReference>
<dbReference type="GO" id="GO:0005886">
    <property type="term" value="C:plasma membrane"/>
    <property type="evidence" value="ECO:0007669"/>
    <property type="project" value="UniProtKB-SubCell"/>
</dbReference>
<dbReference type="GO" id="GO:0052657">
    <property type="term" value="F:guanine phosphoribosyltransferase activity"/>
    <property type="evidence" value="ECO:0007669"/>
    <property type="project" value="RHEA"/>
</dbReference>
<dbReference type="GO" id="GO:0004422">
    <property type="term" value="F:hypoxanthine phosphoribosyltransferase activity"/>
    <property type="evidence" value="ECO:0007669"/>
    <property type="project" value="TreeGrafter"/>
</dbReference>
<dbReference type="GO" id="GO:0000287">
    <property type="term" value="F:magnesium ion binding"/>
    <property type="evidence" value="ECO:0007669"/>
    <property type="project" value="UniProtKB-UniRule"/>
</dbReference>
<dbReference type="GO" id="GO:0000310">
    <property type="term" value="F:xanthine phosphoribosyltransferase activity"/>
    <property type="evidence" value="ECO:0007669"/>
    <property type="project" value="UniProtKB-UniRule"/>
</dbReference>
<dbReference type="GO" id="GO:0032263">
    <property type="term" value="P:GMP salvage"/>
    <property type="evidence" value="ECO:0007669"/>
    <property type="project" value="UniProtKB-UniRule"/>
</dbReference>
<dbReference type="GO" id="GO:0032264">
    <property type="term" value="P:IMP salvage"/>
    <property type="evidence" value="ECO:0007669"/>
    <property type="project" value="TreeGrafter"/>
</dbReference>
<dbReference type="GO" id="GO:0006166">
    <property type="term" value="P:purine ribonucleoside salvage"/>
    <property type="evidence" value="ECO:0007669"/>
    <property type="project" value="UniProtKB-KW"/>
</dbReference>
<dbReference type="GO" id="GO:0032265">
    <property type="term" value="P:XMP salvage"/>
    <property type="evidence" value="ECO:0007669"/>
    <property type="project" value="UniProtKB-UniRule"/>
</dbReference>
<dbReference type="CDD" id="cd06223">
    <property type="entry name" value="PRTases_typeI"/>
    <property type="match status" value="1"/>
</dbReference>
<dbReference type="FunFam" id="3.40.50.2020:FF:000009">
    <property type="entry name" value="Xanthine phosphoribosyltransferase"/>
    <property type="match status" value="1"/>
</dbReference>
<dbReference type="Gene3D" id="3.40.50.2020">
    <property type="match status" value="1"/>
</dbReference>
<dbReference type="HAMAP" id="MF_01903">
    <property type="entry name" value="XGPRT"/>
    <property type="match status" value="1"/>
</dbReference>
<dbReference type="InterPro" id="IPR000836">
    <property type="entry name" value="PRibTrfase_dom"/>
</dbReference>
<dbReference type="InterPro" id="IPR029057">
    <property type="entry name" value="PRTase-like"/>
</dbReference>
<dbReference type="InterPro" id="IPR023747">
    <property type="entry name" value="Xanthine_Guanine_PRibTrfase"/>
</dbReference>
<dbReference type="NCBIfam" id="NF006613">
    <property type="entry name" value="PRK09177.1"/>
    <property type="match status" value="1"/>
</dbReference>
<dbReference type="PANTHER" id="PTHR39563">
    <property type="entry name" value="XANTHINE PHOSPHORIBOSYLTRANSFERASE"/>
    <property type="match status" value="1"/>
</dbReference>
<dbReference type="PANTHER" id="PTHR39563:SF1">
    <property type="entry name" value="XANTHINE-GUANINE PHOSPHORIBOSYLTRANSFERASE"/>
    <property type="match status" value="1"/>
</dbReference>
<dbReference type="Pfam" id="PF00156">
    <property type="entry name" value="Pribosyltran"/>
    <property type="match status" value="1"/>
</dbReference>
<dbReference type="SUPFAM" id="SSF53271">
    <property type="entry name" value="PRTase-like"/>
    <property type="match status" value="1"/>
</dbReference>
<dbReference type="PROSITE" id="PS00103">
    <property type="entry name" value="PUR_PYR_PR_TRANSFER"/>
    <property type="match status" value="1"/>
</dbReference>
<proteinExistence type="inferred from homology"/>
<organism>
    <name type="scientific">Salmonella typhi</name>
    <dbReference type="NCBI Taxonomy" id="90370"/>
    <lineage>
        <taxon>Bacteria</taxon>
        <taxon>Pseudomonadati</taxon>
        <taxon>Pseudomonadota</taxon>
        <taxon>Gammaproteobacteria</taxon>
        <taxon>Enterobacterales</taxon>
        <taxon>Enterobacteriaceae</taxon>
        <taxon>Salmonella</taxon>
    </lineage>
</organism>
<protein>
    <recommendedName>
        <fullName evidence="1">Xanthine-guanine phosphoribosyltransferase</fullName>
        <shortName evidence="1">XGPRT</shortName>
        <ecNumber evidence="1">2.4.2.-</ecNumber>
        <ecNumber evidence="1">2.4.2.22</ecNumber>
    </recommendedName>
    <alternativeName>
        <fullName evidence="1">Xanthine phosphoribosyltransferase</fullName>
    </alternativeName>
</protein>
<comment type="function">
    <text evidence="1">Purine salvage pathway enzyme that catalyzes the transfer of the ribosyl-5-phosphate group from 5-phospho-alpha-D-ribose 1-diphosphate (PRPP) to the N9 position of the 6-oxopurines guanine and xanthine to form the corresponding ribonucleotides GMP (guanosine 5'-monophosphate) and XMP (xanthosine 5'-monophosphate), with the release of PPi. To a lesser extent, also acts on hypoxanthine.</text>
</comment>
<comment type="catalytic activity">
    <reaction evidence="1">
        <text>GMP + diphosphate = guanine + 5-phospho-alpha-D-ribose 1-diphosphate</text>
        <dbReference type="Rhea" id="RHEA:25424"/>
        <dbReference type="ChEBI" id="CHEBI:16235"/>
        <dbReference type="ChEBI" id="CHEBI:33019"/>
        <dbReference type="ChEBI" id="CHEBI:58017"/>
        <dbReference type="ChEBI" id="CHEBI:58115"/>
    </reaction>
    <physiologicalReaction direction="right-to-left" evidence="1">
        <dbReference type="Rhea" id="RHEA:25426"/>
    </physiologicalReaction>
</comment>
<comment type="catalytic activity">
    <reaction evidence="1">
        <text>XMP + diphosphate = xanthine + 5-phospho-alpha-D-ribose 1-diphosphate</text>
        <dbReference type="Rhea" id="RHEA:10800"/>
        <dbReference type="ChEBI" id="CHEBI:17712"/>
        <dbReference type="ChEBI" id="CHEBI:33019"/>
        <dbReference type="ChEBI" id="CHEBI:57464"/>
        <dbReference type="ChEBI" id="CHEBI:58017"/>
        <dbReference type="EC" id="2.4.2.22"/>
    </reaction>
    <physiologicalReaction direction="right-to-left" evidence="1">
        <dbReference type="Rhea" id="RHEA:10802"/>
    </physiologicalReaction>
</comment>
<comment type="catalytic activity">
    <reaction evidence="1">
        <text>IMP + diphosphate = hypoxanthine + 5-phospho-alpha-D-ribose 1-diphosphate</text>
        <dbReference type="Rhea" id="RHEA:17973"/>
        <dbReference type="ChEBI" id="CHEBI:17368"/>
        <dbReference type="ChEBI" id="CHEBI:33019"/>
        <dbReference type="ChEBI" id="CHEBI:58017"/>
        <dbReference type="ChEBI" id="CHEBI:58053"/>
    </reaction>
    <physiologicalReaction direction="right-to-left" evidence="1">
        <dbReference type="Rhea" id="RHEA:17975"/>
    </physiologicalReaction>
</comment>
<comment type="cofactor">
    <cofactor evidence="1">
        <name>Mg(2+)</name>
        <dbReference type="ChEBI" id="CHEBI:18420"/>
    </cofactor>
</comment>
<comment type="pathway">
    <text evidence="1">Purine metabolism; GMP biosynthesis via salvage pathway; GMP from guanine: step 1/1.</text>
</comment>
<comment type="pathway">
    <text evidence="1">Purine metabolism; XMP biosynthesis via salvage pathway; XMP from xanthine: step 1/1.</text>
</comment>
<comment type="subunit">
    <text evidence="1">Homotetramer.</text>
</comment>
<comment type="subcellular location">
    <subcellularLocation>
        <location evidence="1">Cell inner membrane</location>
        <topology evidence="1">Peripheral membrane protein</topology>
    </subcellularLocation>
</comment>
<comment type="similarity">
    <text evidence="1">Belongs to the purine/pyrimidine phosphoribosyltransferase family. XGPT subfamily.</text>
</comment>
<keyword id="KW-0997">Cell inner membrane</keyword>
<keyword id="KW-1003">Cell membrane</keyword>
<keyword id="KW-0328">Glycosyltransferase</keyword>
<keyword id="KW-0460">Magnesium</keyword>
<keyword id="KW-0472">Membrane</keyword>
<keyword id="KW-0479">Metal-binding</keyword>
<keyword id="KW-0660">Purine salvage</keyword>
<keyword id="KW-0808">Transferase</keyword>
<feature type="chain" id="PRO_0000139685" description="Xanthine-guanine phosphoribosyltransferase">
    <location>
        <begin position="1"/>
        <end position="152"/>
    </location>
</feature>
<feature type="binding site" evidence="1">
    <location>
        <begin position="37"/>
        <end position="38"/>
    </location>
    <ligand>
        <name>5-phospho-alpha-D-ribose 1-diphosphate</name>
        <dbReference type="ChEBI" id="CHEBI:58017"/>
    </ligand>
</feature>
<feature type="binding site" evidence="1">
    <location>
        <position position="69"/>
    </location>
    <ligand>
        <name>5-phospho-alpha-D-ribose 1-diphosphate</name>
        <dbReference type="ChEBI" id="CHEBI:58017"/>
    </ligand>
</feature>
<feature type="binding site" evidence="1">
    <location>
        <position position="69"/>
    </location>
    <ligand>
        <name>GMP</name>
        <dbReference type="ChEBI" id="CHEBI:58115"/>
    </ligand>
</feature>
<feature type="binding site" evidence="1">
    <location>
        <begin position="88"/>
        <end position="96"/>
    </location>
    <ligand>
        <name>5-phospho-alpha-D-ribose 1-diphosphate</name>
        <dbReference type="ChEBI" id="CHEBI:58017"/>
    </ligand>
</feature>
<feature type="binding site" evidence="1">
    <location>
        <position position="89"/>
    </location>
    <ligand>
        <name>Mg(2+)</name>
        <dbReference type="ChEBI" id="CHEBI:18420"/>
    </ligand>
</feature>
<feature type="binding site" evidence="1">
    <location>
        <begin position="92"/>
        <end position="96"/>
    </location>
    <ligand>
        <name>GMP</name>
        <dbReference type="ChEBI" id="CHEBI:58115"/>
    </ligand>
</feature>
<feature type="binding site" evidence="1">
    <location>
        <position position="92"/>
    </location>
    <ligand>
        <name>guanine</name>
        <dbReference type="ChEBI" id="CHEBI:16235"/>
    </ligand>
</feature>
<feature type="binding site" evidence="1">
    <location>
        <position position="92"/>
    </location>
    <ligand>
        <name>xanthine</name>
        <dbReference type="ChEBI" id="CHEBI:17712"/>
    </ligand>
</feature>
<feature type="binding site" evidence="1">
    <location>
        <begin position="134"/>
        <end position="135"/>
    </location>
    <ligand>
        <name>GMP</name>
        <dbReference type="ChEBI" id="CHEBI:58115"/>
    </ligand>
</feature>
<feature type="binding site" evidence="1">
    <location>
        <position position="135"/>
    </location>
    <ligand>
        <name>guanine</name>
        <dbReference type="ChEBI" id="CHEBI:16235"/>
    </ligand>
</feature>
<feature type="binding site" evidence="1">
    <location>
        <position position="135"/>
    </location>
    <ligand>
        <name>xanthine</name>
        <dbReference type="ChEBI" id="CHEBI:17712"/>
    </ligand>
</feature>
<reference key="1">
    <citation type="journal article" date="2001" name="Nature">
        <title>Complete genome sequence of a multiple drug resistant Salmonella enterica serovar Typhi CT18.</title>
        <authorList>
            <person name="Parkhill J."/>
            <person name="Dougan G."/>
            <person name="James K.D."/>
            <person name="Thomson N.R."/>
            <person name="Pickard D."/>
            <person name="Wain J."/>
            <person name="Churcher C.M."/>
            <person name="Mungall K.L."/>
            <person name="Bentley S.D."/>
            <person name="Holden M.T.G."/>
            <person name="Sebaihia M."/>
            <person name="Baker S."/>
            <person name="Basham D."/>
            <person name="Brooks K."/>
            <person name="Chillingworth T."/>
            <person name="Connerton P."/>
            <person name="Cronin A."/>
            <person name="Davis P."/>
            <person name="Davies R.M."/>
            <person name="Dowd L."/>
            <person name="White N."/>
            <person name="Farrar J."/>
            <person name="Feltwell T."/>
            <person name="Hamlin N."/>
            <person name="Haque A."/>
            <person name="Hien T.T."/>
            <person name="Holroyd S."/>
            <person name="Jagels K."/>
            <person name="Krogh A."/>
            <person name="Larsen T.S."/>
            <person name="Leather S."/>
            <person name="Moule S."/>
            <person name="O'Gaora P."/>
            <person name="Parry C."/>
            <person name="Quail M.A."/>
            <person name="Rutherford K.M."/>
            <person name="Simmonds M."/>
            <person name="Skelton J."/>
            <person name="Stevens K."/>
            <person name="Whitehead S."/>
            <person name="Barrell B.G."/>
        </authorList>
    </citation>
    <scope>NUCLEOTIDE SEQUENCE [LARGE SCALE GENOMIC DNA]</scope>
    <source>
        <strain>CT18</strain>
    </source>
</reference>
<reference key="2">
    <citation type="journal article" date="2003" name="J. Bacteriol.">
        <title>Comparative genomics of Salmonella enterica serovar Typhi strains Ty2 and CT18.</title>
        <authorList>
            <person name="Deng W."/>
            <person name="Liou S.-R."/>
            <person name="Plunkett G. III"/>
            <person name="Mayhew G.F."/>
            <person name="Rose D.J."/>
            <person name="Burland V."/>
            <person name="Kodoyianni V."/>
            <person name="Schwartz D.C."/>
            <person name="Blattner F.R."/>
        </authorList>
    </citation>
    <scope>NUCLEOTIDE SEQUENCE [LARGE SCALE GENOMIC DNA]</scope>
    <source>
        <strain>ATCC 700931 / Ty2</strain>
    </source>
</reference>
<name>XGPT_SALTI</name>
<sequence>MSEKYVVTWDMLQIHARKLASRLMPSEQWKGIIAVSRGGLVPGALLARELGIRHVDTVCISSYDHDNQRELKVLKRAEGDGEGFIVIDDLVDTGGTAVAIREMYPKAHFVTIFAKPAGRPLVDDYVIDIPQNTWIEQPWDMGVVFVPPISGR</sequence>